<reference key="1">
    <citation type="journal article" date="2009" name="PLoS Genet.">
        <title>Organised genome dynamics in the Escherichia coli species results in highly diverse adaptive paths.</title>
        <authorList>
            <person name="Touchon M."/>
            <person name="Hoede C."/>
            <person name="Tenaillon O."/>
            <person name="Barbe V."/>
            <person name="Baeriswyl S."/>
            <person name="Bidet P."/>
            <person name="Bingen E."/>
            <person name="Bonacorsi S."/>
            <person name="Bouchier C."/>
            <person name="Bouvet O."/>
            <person name="Calteau A."/>
            <person name="Chiapello H."/>
            <person name="Clermont O."/>
            <person name="Cruveiller S."/>
            <person name="Danchin A."/>
            <person name="Diard M."/>
            <person name="Dossat C."/>
            <person name="Karoui M.E."/>
            <person name="Frapy E."/>
            <person name="Garry L."/>
            <person name="Ghigo J.M."/>
            <person name="Gilles A.M."/>
            <person name="Johnson J."/>
            <person name="Le Bouguenec C."/>
            <person name="Lescat M."/>
            <person name="Mangenot S."/>
            <person name="Martinez-Jehanne V."/>
            <person name="Matic I."/>
            <person name="Nassif X."/>
            <person name="Oztas S."/>
            <person name="Petit M.A."/>
            <person name="Pichon C."/>
            <person name="Rouy Z."/>
            <person name="Ruf C.S."/>
            <person name="Schneider D."/>
            <person name="Tourret J."/>
            <person name="Vacherie B."/>
            <person name="Vallenet D."/>
            <person name="Medigue C."/>
            <person name="Rocha E.P.C."/>
            <person name="Denamur E."/>
        </authorList>
    </citation>
    <scope>NUCLEOTIDE SEQUENCE [LARGE SCALE GENOMIC DNA]</scope>
    <source>
        <strain>UMN026 / ExPEC</strain>
    </source>
</reference>
<proteinExistence type="inferred from homology"/>
<evidence type="ECO:0000255" key="1">
    <source>
        <dbReference type="HAMAP-Rule" id="MF_01202"/>
    </source>
</evidence>
<sequence length="432" mass="47607">MRVVILGSGVVGVASAWYLNQAGHEVTVIDREPGAALETSAANAGQISPGYAAPWAAPGVPLKAIKWMFQRHAPLAVRLDGTQFQLKWMWQMLRNCDTSHYMENKGRMVRLAEYSRDCLKALRAETNIQYEGRQGGTLQLFRTEQQYENATRDIAVLEDAGVPYQLLESSRLAEVEPALAEVAHKLTGGLQLPNDETGDCQLFTQNLARMAEQAGVKFRFNTPVDQLLCDGEQIYGVKCGDEVIKADAYVMAFGSYSTAMLKGIVDIPVYPLKGYSLTIPIAQEDGAPVSTILDETYKIAITRFDNRIRVGGMAEIVGFNTELLQPRRETLEMVVRDLYPRGGHVEQATFWTGLRPMTPDGTPVVGRTRFKNLWLNTGHGTLGWTMACGSGQLLSDLLSGRTPAIPYEDLSVARYSRGFTPSRPGHLHGAHS</sequence>
<protein>
    <recommendedName>
        <fullName evidence="1">D-amino acid dehydrogenase</fullName>
        <ecNumber evidence="1">1.4.99.-</ecNumber>
    </recommendedName>
</protein>
<dbReference type="EC" id="1.4.99.-" evidence="1"/>
<dbReference type="EMBL" id="CU928163">
    <property type="protein sequence ID" value="CAR12686.1"/>
    <property type="molecule type" value="Genomic_DNA"/>
</dbReference>
<dbReference type="RefSeq" id="WP_001266908.1">
    <property type="nucleotide sequence ID" value="NC_011751.1"/>
</dbReference>
<dbReference type="RefSeq" id="YP_002412223.1">
    <property type="nucleotide sequence ID" value="NC_011751.1"/>
</dbReference>
<dbReference type="SMR" id="B7N3Z3"/>
<dbReference type="STRING" id="585056.ECUMN_1478"/>
<dbReference type="GeneID" id="93776243"/>
<dbReference type="KEGG" id="eum:ECUMN_1478"/>
<dbReference type="PATRIC" id="fig|585056.7.peg.1674"/>
<dbReference type="HOGENOM" id="CLU_007884_9_2_6"/>
<dbReference type="UniPathway" id="UPA00043">
    <property type="reaction ID" value="UER00498"/>
</dbReference>
<dbReference type="Proteomes" id="UP000007097">
    <property type="component" value="Chromosome"/>
</dbReference>
<dbReference type="GO" id="GO:0005737">
    <property type="term" value="C:cytoplasm"/>
    <property type="evidence" value="ECO:0007669"/>
    <property type="project" value="TreeGrafter"/>
</dbReference>
<dbReference type="GO" id="GO:0005886">
    <property type="term" value="C:plasma membrane"/>
    <property type="evidence" value="ECO:0007669"/>
    <property type="project" value="TreeGrafter"/>
</dbReference>
<dbReference type="GO" id="GO:0008718">
    <property type="term" value="F:D-amino-acid dehydrogenase activity"/>
    <property type="evidence" value="ECO:0007669"/>
    <property type="project" value="UniProtKB-UniRule"/>
</dbReference>
<dbReference type="GO" id="GO:0055130">
    <property type="term" value="P:D-alanine catabolic process"/>
    <property type="evidence" value="ECO:0007669"/>
    <property type="project" value="UniProtKB-UniPathway"/>
</dbReference>
<dbReference type="FunFam" id="3.50.50.60:FF:000020">
    <property type="entry name" value="D-amino acid dehydrogenase"/>
    <property type="match status" value="1"/>
</dbReference>
<dbReference type="Gene3D" id="3.30.9.10">
    <property type="entry name" value="D-Amino Acid Oxidase, subunit A, domain 2"/>
    <property type="match status" value="1"/>
</dbReference>
<dbReference type="Gene3D" id="3.50.50.60">
    <property type="entry name" value="FAD/NAD(P)-binding domain"/>
    <property type="match status" value="2"/>
</dbReference>
<dbReference type="HAMAP" id="MF_01202">
    <property type="entry name" value="DadA"/>
    <property type="match status" value="1"/>
</dbReference>
<dbReference type="InterPro" id="IPR023080">
    <property type="entry name" value="DadA"/>
</dbReference>
<dbReference type="InterPro" id="IPR006076">
    <property type="entry name" value="FAD-dep_OxRdtase"/>
</dbReference>
<dbReference type="InterPro" id="IPR036188">
    <property type="entry name" value="FAD/NAD-bd_sf"/>
</dbReference>
<dbReference type="NCBIfam" id="NF001933">
    <property type="entry name" value="PRK00711.1"/>
    <property type="match status" value="1"/>
</dbReference>
<dbReference type="PANTHER" id="PTHR13847:SF280">
    <property type="entry name" value="D-AMINO ACID DEHYDROGENASE"/>
    <property type="match status" value="1"/>
</dbReference>
<dbReference type="PANTHER" id="PTHR13847">
    <property type="entry name" value="SARCOSINE DEHYDROGENASE-RELATED"/>
    <property type="match status" value="1"/>
</dbReference>
<dbReference type="Pfam" id="PF01266">
    <property type="entry name" value="DAO"/>
    <property type="match status" value="1"/>
</dbReference>
<dbReference type="SUPFAM" id="SSF54373">
    <property type="entry name" value="FAD-linked reductases, C-terminal domain"/>
    <property type="match status" value="1"/>
</dbReference>
<dbReference type="SUPFAM" id="SSF51905">
    <property type="entry name" value="FAD/NAD(P)-binding domain"/>
    <property type="match status" value="1"/>
</dbReference>
<feature type="chain" id="PRO_1000138652" description="D-amino acid dehydrogenase">
    <location>
        <begin position="1"/>
        <end position="432"/>
    </location>
</feature>
<feature type="binding site" evidence="1">
    <location>
        <begin position="3"/>
        <end position="17"/>
    </location>
    <ligand>
        <name>FAD</name>
        <dbReference type="ChEBI" id="CHEBI:57692"/>
    </ligand>
</feature>
<keyword id="KW-0274">FAD</keyword>
<keyword id="KW-0285">Flavoprotein</keyword>
<keyword id="KW-0560">Oxidoreductase</keyword>
<organism>
    <name type="scientific">Escherichia coli O17:K52:H18 (strain UMN026 / ExPEC)</name>
    <dbReference type="NCBI Taxonomy" id="585056"/>
    <lineage>
        <taxon>Bacteria</taxon>
        <taxon>Pseudomonadati</taxon>
        <taxon>Pseudomonadota</taxon>
        <taxon>Gammaproteobacteria</taxon>
        <taxon>Enterobacterales</taxon>
        <taxon>Enterobacteriaceae</taxon>
        <taxon>Escherichia</taxon>
    </lineage>
</organism>
<comment type="function">
    <text evidence="1">Oxidative deamination of D-amino acids.</text>
</comment>
<comment type="catalytic activity">
    <reaction evidence="1">
        <text>a D-alpha-amino acid + A + H2O = a 2-oxocarboxylate + AH2 + NH4(+)</text>
        <dbReference type="Rhea" id="RHEA:18125"/>
        <dbReference type="ChEBI" id="CHEBI:13193"/>
        <dbReference type="ChEBI" id="CHEBI:15377"/>
        <dbReference type="ChEBI" id="CHEBI:17499"/>
        <dbReference type="ChEBI" id="CHEBI:28938"/>
        <dbReference type="ChEBI" id="CHEBI:35179"/>
        <dbReference type="ChEBI" id="CHEBI:59871"/>
    </reaction>
</comment>
<comment type="cofactor">
    <cofactor evidence="1">
        <name>FAD</name>
        <dbReference type="ChEBI" id="CHEBI:57692"/>
    </cofactor>
</comment>
<comment type="pathway">
    <text>Amino-acid degradation; D-alanine degradation; NH(3) and pyruvate from D-alanine: step 1/1.</text>
</comment>
<comment type="similarity">
    <text evidence="1">Belongs to the DadA oxidoreductase family.</text>
</comment>
<accession>B7N3Z3</accession>
<name>DADA_ECOLU</name>
<gene>
    <name evidence="1" type="primary">dadA</name>
    <name type="ordered locus">ECUMN_1478</name>
</gene>